<feature type="transit peptide" description="Mitochondrion" evidence="1">
    <location>
        <begin position="1"/>
        <end position="32"/>
    </location>
</feature>
<feature type="chain" id="PRO_0000002528" description="ATP synthase peripheral stalk subunit F6, mitochondrial">
    <location>
        <begin position="33"/>
        <end position="108"/>
    </location>
</feature>
<feature type="modified residue" description="N6-acetyllysine" evidence="3">
    <location>
        <position position="41"/>
    </location>
</feature>
<feature type="modified residue" description="N6-acetyllysine" evidence="3">
    <location>
        <position position="46"/>
    </location>
</feature>
<feature type="modified residue" description="N6-acetyllysine" evidence="5">
    <location>
        <position position="79"/>
    </location>
</feature>
<feature type="modified residue" description="N6-acetyllysine; alternate" evidence="5">
    <location>
        <position position="84"/>
    </location>
</feature>
<feature type="modified residue" description="N6-succinyllysine; alternate" evidence="5">
    <location>
        <position position="84"/>
    </location>
</feature>
<feature type="modified residue" description="N6-acetyllysine; alternate" evidence="5">
    <location>
        <position position="94"/>
    </location>
</feature>
<feature type="modified residue" description="N6-succinyllysine; alternate" evidence="5">
    <location>
        <position position="94"/>
    </location>
</feature>
<feature type="modified residue" description="N6-acetyllysine; alternate" evidence="3">
    <location>
        <position position="99"/>
    </location>
</feature>
<feature type="modified residue" description="N6-succinyllysine; alternate" evidence="5">
    <location>
        <position position="99"/>
    </location>
</feature>
<feature type="modified residue" description="N6-acetyllysine" evidence="3">
    <location>
        <position position="105"/>
    </location>
</feature>
<name>ATP5J_MACFA</name>
<sequence length="108" mass="12587">MILQRLFRFSSIIRSAVSVHFRRNIGVTAVAFNKELDPVQKLFVDKIREYKSKRQTSGGPVDTGPEYQQELEKELFKLKQMFGKADMNTFPTFKFEDPKFEVIEKPPA</sequence>
<keyword id="KW-0007">Acetylation</keyword>
<keyword id="KW-0138">CF(0)</keyword>
<keyword id="KW-0375">Hydrogen ion transport</keyword>
<keyword id="KW-0406">Ion transport</keyword>
<keyword id="KW-0472">Membrane</keyword>
<keyword id="KW-0496">Mitochondrion</keyword>
<keyword id="KW-0999">Mitochondrion inner membrane</keyword>
<keyword id="KW-1185">Reference proteome</keyword>
<keyword id="KW-0809">Transit peptide</keyword>
<keyword id="KW-0813">Transport</keyword>
<accession>Q8SPH6</accession>
<protein>
    <recommendedName>
        <fullName evidence="3">ATP synthase peripheral stalk subunit F6, mitochondrial</fullName>
        <shortName>ATPase subunit F6</shortName>
    </recommendedName>
    <alternativeName>
        <fullName evidence="6">ATP synthase peripheral stalk subunit F6</fullName>
    </alternativeName>
</protein>
<comment type="function">
    <text evidence="2 3 4">Subunit F6, of the mitochondrial membrane ATP synthase complex (F(1)F(0) ATP synthase or Complex V) that produces ATP from ADP in the presence of a proton gradient across the membrane which is generated by electron transport complexes of the respiratory chain. ATP synthase complex consist of a soluble F(1) head domain - the catalytic core - and a membrane F(1) domain - the membrane proton channel. These two domains are linked by a central stalk rotating inside the F(1) region and a stationary peripheral stalk. During catalysis, ATP synthesis in the catalytic domain of F(1) is coupled via a rotary mechanism of the central stalk subunits to proton translocation (By similarity). In vivo, can only synthesize ATP although its ATP hydrolase activity can be activated artificially in vitro (By similarity). Part of the complex F(0) domain (By similarity). Part of the complex F(0) domain and the peripheric stalk, which acts as a stator to hold the catalytic alpha(3)beta(3) subcomplex and subunit a/ATP6 static relative to the rotary elements (By similarity).</text>
</comment>
<comment type="subunit">
    <text evidence="3">Component of the ATP synthase complex composed at least of ATP5F1A/subunit alpha, ATP5F1B/subunit beta, ATP5MC1/subunit c (homooctomer), MT-ATP6/subunit a, MT-ATP8/subunit 8, ATP5ME/subunit e, ATP5MF/subunit f, ATP5MG/subunit g, ATP5MK/subunit k, ATP5MJ/subunit j, ATP5F1C/subunit gamma, ATP5F1D/subunit delta, ATP5F1E/subunit epsilon, ATP5PF/subunit F6, ATP5PB/subunit b, ATP5PD/subunit d, ATP5PO/subunit OSCP. ATP synthase complex consists of a soluble F(1) head domain (subunits alpha(3) and beta(3)) - the catalytic core - and a membrane F(0) domain - the membrane proton channel (subunits c, a, 8, e, f, g, k and j). These two domains are linked by a central stalk (subunits gamma, delta, and epsilon) rotating inside the F1 region and a stationary peripheral stalk (subunits F6, b, d, and OSCP).</text>
</comment>
<comment type="subcellular location">
    <subcellularLocation>
        <location>Mitochondrion</location>
    </subcellularLocation>
    <subcellularLocation>
        <location>Mitochondrion inner membrane</location>
    </subcellularLocation>
</comment>
<comment type="similarity">
    <text evidence="6">Belongs to the eukaryotic ATPase subunit F6 family.</text>
</comment>
<evidence type="ECO:0000250" key="1"/>
<evidence type="ECO:0000250" key="2">
    <source>
        <dbReference type="UniProtKB" id="P02721"/>
    </source>
</evidence>
<evidence type="ECO:0000250" key="3">
    <source>
        <dbReference type="UniProtKB" id="P18859"/>
    </source>
</evidence>
<evidence type="ECO:0000250" key="4">
    <source>
        <dbReference type="UniProtKB" id="P19483"/>
    </source>
</evidence>
<evidence type="ECO:0000250" key="5">
    <source>
        <dbReference type="UniProtKB" id="P97450"/>
    </source>
</evidence>
<evidence type="ECO:0000305" key="6"/>
<dbReference type="EMBL" id="AB072025">
    <property type="protein sequence ID" value="BAB86814.1"/>
    <property type="molecule type" value="mRNA"/>
</dbReference>
<dbReference type="RefSeq" id="NP_001271827.1">
    <property type="nucleotide sequence ID" value="NM_001284898.1"/>
</dbReference>
<dbReference type="RefSeq" id="XP_015302102.1">
    <property type="nucleotide sequence ID" value="XM_015446616.3"/>
</dbReference>
<dbReference type="RefSeq" id="XP_015302103.1">
    <property type="nucleotide sequence ID" value="XM_015446617.3"/>
</dbReference>
<dbReference type="SMR" id="Q8SPH6"/>
<dbReference type="STRING" id="9541.ENSMFAP00000026522"/>
<dbReference type="Ensembl" id="ENSMFAT00000000698.2">
    <property type="protein sequence ID" value="ENSMFAP00000026517.1"/>
    <property type="gene ID" value="ENSMFAG00000044695.2"/>
</dbReference>
<dbReference type="GeneID" id="102117567"/>
<dbReference type="KEGG" id="mcf:102117567"/>
<dbReference type="CTD" id="522"/>
<dbReference type="VEuPathDB" id="HostDB:ENSMFAG00000044695"/>
<dbReference type="eggNOG" id="KOG4634">
    <property type="taxonomic scope" value="Eukaryota"/>
</dbReference>
<dbReference type="GeneTree" id="ENSGT00390000008902"/>
<dbReference type="OMA" id="RRNIGMS"/>
<dbReference type="Proteomes" id="UP000233100">
    <property type="component" value="Chromosome 3"/>
</dbReference>
<dbReference type="Bgee" id="ENSMFAG00000044695">
    <property type="expression patterns" value="Expressed in heart and 13 other cell types or tissues"/>
</dbReference>
<dbReference type="GO" id="GO:0005743">
    <property type="term" value="C:mitochondrial inner membrane"/>
    <property type="evidence" value="ECO:0007669"/>
    <property type="project" value="UniProtKB-SubCell"/>
</dbReference>
<dbReference type="GO" id="GO:0045259">
    <property type="term" value="C:proton-transporting ATP synthase complex"/>
    <property type="evidence" value="ECO:0000250"/>
    <property type="project" value="UniProtKB"/>
</dbReference>
<dbReference type="GO" id="GO:0015078">
    <property type="term" value="F:proton transmembrane transporter activity"/>
    <property type="evidence" value="ECO:0007669"/>
    <property type="project" value="InterPro"/>
</dbReference>
<dbReference type="GO" id="GO:0015986">
    <property type="term" value="P:proton motive force-driven ATP synthesis"/>
    <property type="evidence" value="ECO:0007669"/>
    <property type="project" value="InterPro"/>
</dbReference>
<dbReference type="FunFam" id="1.10.246.110:FF:000001">
    <property type="entry name" value="ATP synthase-coupling factor 6, mitochondrial"/>
    <property type="match status" value="1"/>
</dbReference>
<dbReference type="Gene3D" id="1.10.246.110">
    <property type="entry name" value="Mitochondrial ATP synthase-coupling factor 6"/>
    <property type="match status" value="1"/>
</dbReference>
<dbReference type="InterPro" id="IPR008387">
    <property type="entry name" value="ATP_synth_f6_mt"/>
</dbReference>
<dbReference type="InterPro" id="IPR036204">
    <property type="entry name" value="ATP_synth_f6_sf_mt"/>
</dbReference>
<dbReference type="PANTHER" id="PTHR12441">
    <property type="entry name" value="ATP SYNTHASE COUPLING FACTOR 6, MITOCHONDRIAL"/>
    <property type="match status" value="1"/>
</dbReference>
<dbReference type="PANTHER" id="PTHR12441:SF10">
    <property type="entry name" value="ATP SYNTHASE-COUPLING FACTOR 6, MITOCHONDRIAL"/>
    <property type="match status" value="1"/>
</dbReference>
<dbReference type="Pfam" id="PF05511">
    <property type="entry name" value="ATP-synt_F6"/>
    <property type="match status" value="1"/>
</dbReference>
<dbReference type="PIRSF" id="PIRSF002455">
    <property type="entry name" value="ATP_synthase_coupling_factor_6"/>
    <property type="match status" value="1"/>
</dbReference>
<dbReference type="SUPFAM" id="SSF111357">
    <property type="entry name" value="Mitochondrial ATP synthase coupling factor 6"/>
    <property type="match status" value="1"/>
</dbReference>
<organism>
    <name type="scientific">Macaca fascicularis</name>
    <name type="common">Crab-eating macaque</name>
    <name type="synonym">Cynomolgus monkey</name>
    <dbReference type="NCBI Taxonomy" id="9541"/>
    <lineage>
        <taxon>Eukaryota</taxon>
        <taxon>Metazoa</taxon>
        <taxon>Chordata</taxon>
        <taxon>Craniata</taxon>
        <taxon>Vertebrata</taxon>
        <taxon>Euteleostomi</taxon>
        <taxon>Mammalia</taxon>
        <taxon>Eutheria</taxon>
        <taxon>Euarchontoglires</taxon>
        <taxon>Primates</taxon>
        <taxon>Haplorrhini</taxon>
        <taxon>Catarrhini</taxon>
        <taxon>Cercopithecidae</taxon>
        <taxon>Cercopithecinae</taxon>
        <taxon>Macaca</taxon>
    </lineage>
</organism>
<proteinExistence type="inferred from homology"/>
<gene>
    <name evidence="3" type="primary">ATP5PF</name>
    <name type="synonym">ATP5J</name>
    <name type="ORF">QnpA-21593</name>
</gene>
<reference key="1">
    <citation type="journal article" date="2002" name="Genomics">
        <title>Search for genes positively selected during primate evolution by 5'-end-sequence screening of cynomolgus monkey cDNAs.</title>
        <authorList>
            <person name="Osada N."/>
            <person name="Kusuda J."/>
            <person name="Hirata M."/>
            <person name="Tanuma R."/>
            <person name="Hida M."/>
            <person name="Sugano S."/>
            <person name="Hirai M."/>
            <person name="Hashimoto K."/>
        </authorList>
    </citation>
    <scope>NUCLEOTIDE SEQUENCE [LARGE SCALE MRNA]</scope>
    <source>
        <tissue>Parietal cortex</tissue>
    </source>
</reference>